<keyword id="KW-0002">3D-structure</keyword>
<keyword id="KW-0963">Cytoplasm</keyword>
<keyword id="KW-0256">Endoplasmic reticulum</keyword>
<keyword id="KW-1185">Reference proteome</keyword>
<keyword id="KW-0687">Ribonucleoprotein</keyword>
<keyword id="KW-0689">Ribosomal protein</keyword>
<sequence length="136" mass="15728">MGKIMKPGKVVLVLRGKYAGRKAVVVKQQDEGVSDRTYPHAIIAGIDRYPLKVTKDMGKKKIEKRNKLKPFLKVVSYTHLLPTRYSVDVAFDKTNINKEALKAPSKKRKALVEVKSKFEERYKTGKNKWFFTKLRF</sequence>
<feature type="chain" id="PRO_0000126084" description="Large ribosomal subunit protein eL27">
    <location>
        <begin position="1"/>
        <end position="136"/>
    </location>
</feature>
<feature type="domain" description="KOW">
    <location>
        <begin position="5"/>
        <end position="36"/>
    </location>
</feature>
<organism>
    <name type="scientific">Caenorhabditis elegans</name>
    <dbReference type="NCBI Taxonomy" id="6239"/>
    <lineage>
        <taxon>Eukaryota</taxon>
        <taxon>Metazoa</taxon>
        <taxon>Ecdysozoa</taxon>
        <taxon>Nematoda</taxon>
        <taxon>Chromadorea</taxon>
        <taxon>Rhabditida</taxon>
        <taxon>Rhabditina</taxon>
        <taxon>Rhabditomorpha</taxon>
        <taxon>Rhabditoidea</taxon>
        <taxon>Rhabditidae</taxon>
        <taxon>Peloderinae</taxon>
        <taxon>Caenorhabditis</taxon>
    </lineage>
</organism>
<name>RL27_CAEEL</name>
<reference key="1">
    <citation type="submission" date="1997-02" db="EMBL/GenBank/DDBJ databases">
        <authorList>
            <person name="Blaxter M.L."/>
            <person name="Brodie J."/>
        </authorList>
    </citation>
    <scope>NUCLEOTIDE SEQUENCE [MRNA]</scope>
    <source>
        <strain>Bristol N2</strain>
    </source>
</reference>
<reference key="2">
    <citation type="journal article" date="1998" name="Science">
        <title>Genome sequence of the nematode C. elegans: a platform for investigating biology.</title>
        <authorList>
            <consortium name="The C. elegans sequencing consortium"/>
        </authorList>
    </citation>
    <scope>NUCLEOTIDE SEQUENCE [LARGE SCALE GENOMIC DNA]</scope>
    <source>
        <strain>Bristol N2</strain>
    </source>
</reference>
<accession>P91914</accession>
<dbReference type="EMBL" id="U89308">
    <property type="protein sequence ID" value="AAB48626.1"/>
    <property type="molecule type" value="mRNA"/>
</dbReference>
<dbReference type="EMBL" id="FO080940">
    <property type="protein sequence ID" value="CCD67946.1"/>
    <property type="molecule type" value="Genomic_DNA"/>
</dbReference>
<dbReference type="RefSeq" id="NP_001367687.1">
    <property type="nucleotide sequence ID" value="NM_001381283.3"/>
</dbReference>
<dbReference type="RefSeq" id="NP_490905.1">
    <property type="nucleotide sequence ID" value="NM_058504.6"/>
</dbReference>
<dbReference type="PDB" id="9BH5">
    <property type="method" value="EM"/>
    <property type="resolution" value="2.63 A"/>
    <property type="chains" value="CZ=1-136"/>
</dbReference>
<dbReference type="PDB" id="9CAI">
    <property type="method" value="EM"/>
    <property type="resolution" value="2.59 A"/>
    <property type="chains" value="CZ=1-136"/>
</dbReference>
<dbReference type="PDBsum" id="9BH5"/>
<dbReference type="PDBsum" id="9CAI"/>
<dbReference type="EMDB" id="EMD-44533"/>
<dbReference type="EMDB" id="EMD-45392"/>
<dbReference type="SMR" id="P91914"/>
<dbReference type="BioGRID" id="37240">
    <property type="interactions" value="91"/>
</dbReference>
<dbReference type="FunCoup" id="P91914">
    <property type="interactions" value="1636"/>
</dbReference>
<dbReference type="STRING" id="6239.C53H9.1.1"/>
<dbReference type="PaxDb" id="6239-C53H9.1"/>
<dbReference type="PeptideAtlas" id="P91914"/>
<dbReference type="EnsemblMetazoa" id="C53H9.1.1">
    <property type="protein sequence ID" value="C53H9.1.1"/>
    <property type="gene ID" value="WBGene00004441"/>
</dbReference>
<dbReference type="GeneID" id="171750"/>
<dbReference type="UCSC" id="C53H9.1.1">
    <property type="organism name" value="c. elegans"/>
</dbReference>
<dbReference type="AGR" id="WB:WBGene00004441"/>
<dbReference type="WormBase" id="C53H9.1">
    <property type="protein sequence ID" value="CE19381"/>
    <property type="gene ID" value="WBGene00004441"/>
    <property type="gene designation" value="rpl-27"/>
</dbReference>
<dbReference type="eggNOG" id="KOG3418">
    <property type="taxonomic scope" value="Eukaryota"/>
</dbReference>
<dbReference type="GeneTree" id="ENSGT00390000010721"/>
<dbReference type="HOGENOM" id="CLU_067359_0_1_1"/>
<dbReference type="InParanoid" id="P91914"/>
<dbReference type="OMA" id="KMLNYNH"/>
<dbReference type="OrthoDB" id="2365484at2759"/>
<dbReference type="PhylomeDB" id="P91914"/>
<dbReference type="Reactome" id="R-CEL-156827">
    <property type="pathway name" value="L13a-mediated translational silencing of Ceruloplasmin expression"/>
</dbReference>
<dbReference type="Reactome" id="R-CEL-1799339">
    <property type="pathway name" value="SRP-dependent cotranslational protein targeting to membrane"/>
</dbReference>
<dbReference type="Reactome" id="R-CEL-72689">
    <property type="pathway name" value="Formation of a pool of free 40S subunits"/>
</dbReference>
<dbReference type="Reactome" id="R-CEL-72706">
    <property type="pathway name" value="GTP hydrolysis and joining of the 60S ribosomal subunit"/>
</dbReference>
<dbReference type="Reactome" id="R-CEL-975956">
    <property type="pathway name" value="Nonsense Mediated Decay (NMD) independent of the Exon Junction Complex (EJC)"/>
</dbReference>
<dbReference type="Reactome" id="R-CEL-975957">
    <property type="pathway name" value="Nonsense Mediated Decay (NMD) enhanced by the Exon Junction Complex (EJC)"/>
</dbReference>
<dbReference type="PRO" id="PR:P91914"/>
<dbReference type="Proteomes" id="UP000001940">
    <property type="component" value="Chromosome I"/>
</dbReference>
<dbReference type="Bgee" id="WBGene00004441">
    <property type="expression patterns" value="Expressed in larva and 3 other cell types or tissues"/>
</dbReference>
<dbReference type="GO" id="GO:0098556">
    <property type="term" value="C:cytoplasmic side of rough endoplasmic reticulum membrane"/>
    <property type="evidence" value="ECO:0000250"/>
    <property type="project" value="UniProtKB"/>
</dbReference>
<dbReference type="GO" id="GO:0022625">
    <property type="term" value="C:cytosolic large ribosomal subunit"/>
    <property type="evidence" value="ECO:0000318"/>
    <property type="project" value="GO_Central"/>
</dbReference>
<dbReference type="GO" id="GO:0015934">
    <property type="term" value="C:large ribosomal subunit"/>
    <property type="evidence" value="ECO:0000250"/>
    <property type="project" value="UniProtKB"/>
</dbReference>
<dbReference type="GO" id="GO:0003735">
    <property type="term" value="F:structural constituent of ribosome"/>
    <property type="evidence" value="ECO:0000318"/>
    <property type="project" value="GO_Central"/>
</dbReference>
<dbReference type="GO" id="GO:0006412">
    <property type="term" value="P:translation"/>
    <property type="evidence" value="ECO:0007669"/>
    <property type="project" value="InterPro"/>
</dbReference>
<dbReference type="CDD" id="cd06090">
    <property type="entry name" value="KOW_RPL27"/>
    <property type="match status" value="1"/>
</dbReference>
<dbReference type="FunFam" id="2.30.30.770:FF:000001">
    <property type="entry name" value="60S ribosomal protein L27"/>
    <property type="match status" value="1"/>
</dbReference>
<dbReference type="Gene3D" id="2.30.30.770">
    <property type="match status" value="1"/>
</dbReference>
<dbReference type="InterPro" id="IPR005824">
    <property type="entry name" value="KOW"/>
</dbReference>
<dbReference type="InterPro" id="IPR001141">
    <property type="entry name" value="Ribosomal_eL27"/>
</dbReference>
<dbReference type="InterPro" id="IPR018262">
    <property type="entry name" value="Ribosomal_eL27_CS"/>
</dbReference>
<dbReference type="InterPro" id="IPR041991">
    <property type="entry name" value="Ribosomal_eL27_KOW"/>
</dbReference>
<dbReference type="InterPro" id="IPR038655">
    <property type="entry name" value="Ribosomal_eL27_sf"/>
</dbReference>
<dbReference type="InterPro" id="IPR008991">
    <property type="entry name" value="Translation_prot_SH3-like_sf"/>
</dbReference>
<dbReference type="PANTHER" id="PTHR10497">
    <property type="entry name" value="60S RIBOSOMAL PROTEIN L27"/>
    <property type="match status" value="1"/>
</dbReference>
<dbReference type="Pfam" id="PF00467">
    <property type="entry name" value="KOW"/>
    <property type="match status" value="1"/>
</dbReference>
<dbReference type="Pfam" id="PF01777">
    <property type="entry name" value="Ribosomal_L27e"/>
    <property type="match status" value="1"/>
</dbReference>
<dbReference type="SMART" id="SM00739">
    <property type="entry name" value="KOW"/>
    <property type="match status" value="1"/>
</dbReference>
<dbReference type="SUPFAM" id="SSF50104">
    <property type="entry name" value="Translation proteins SH3-like domain"/>
    <property type="match status" value="1"/>
</dbReference>
<dbReference type="PROSITE" id="PS01107">
    <property type="entry name" value="RIBOSOMAL_L27E"/>
    <property type="match status" value="1"/>
</dbReference>
<protein>
    <recommendedName>
        <fullName evidence="3">Large ribosomal subunit protein eL27</fullName>
    </recommendedName>
    <alternativeName>
        <fullName>60S ribosomal protein L27</fullName>
    </alternativeName>
</protein>
<proteinExistence type="evidence at protein level"/>
<gene>
    <name type="primary">rpl-27</name>
    <name type="ORF">C53H9.1</name>
</gene>
<comment type="function">
    <text evidence="2">Component of the large ribosomal subunit.</text>
</comment>
<comment type="subunit">
    <text evidence="2">Component of the large ribosomal subunit.</text>
</comment>
<comment type="subcellular location">
    <subcellularLocation>
        <location evidence="2">Cytoplasm</location>
        <location evidence="2">Cytosol</location>
    </subcellularLocation>
    <subcellularLocation>
        <location evidence="2">Cytoplasm</location>
    </subcellularLocation>
    <subcellularLocation>
        <location evidence="1">Rough endoplasmic reticulum</location>
    </subcellularLocation>
    <text evidence="1 2">Detected on cytosolic polysomes (By similarity). Detected in ribosomes that are associated with the rough endoplasmic reticulum (By similarity).</text>
</comment>
<comment type="similarity">
    <text evidence="3">Belongs to the eukaryotic ribosomal protein eL27 family.</text>
</comment>
<evidence type="ECO:0000250" key="1">
    <source>
        <dbReference type="UniProtKB" id="A1XQU5"/>
    </source>
</evidence>
<evidence type="ECO:0000250" key="2">
    <source>
        <dbReference type="UniProtKB" id="P61353"/>
    </source>
</evidence>
<evidence type="ECO:0000305" key="3"/>